<organism>
    <name type="scientific">Salmonella paratyphi C (strain RKS4594)</name>
    <dbReference type="NCBI Taxonomy" id="476213"/>
    <lineage>
        <taxon>Bacteria</taxon>
        <taxon>Pseudomonadati</taxon>
        <taxon>Pseudomonadota</taxon>
        <taxon>Gammaproteobacteria</taxon>
        <taxon>Enterobacterales</taxon>
        <taxon>Enterobacteriaceae</taxon>
        <taxon>Salmonella</taxon>
    </lineage>
</organism>
<accession>C0PVZ1</accession>
<keyword id="KW-0556">Organic radical</keyword>
<feature type="chain" id="PRO_1000148571" description="Autonomous glycyl radical cofactor">
    <location>
        <begin position="1"/>
        <end position="127"/>
    </location>
</feature>
<feature type="domain" description="Glycine radical" evidence="1">
    <location>
        <begin position="5"/>
        <end position="127"/>
    </location>
</feature>
<feature type="modified residue" description="Glycine radical" evidence="1">
    <location>
        <position position="102"/>
    </location>
</feature>
<proteinExistence type="inferred from homology"/>
<comment type="function">
    <text evidence="1">Acts as a radical domain for damaged PFL and possibly other radical proteins.</text>
</comment>
<gene>
    <name evidence="1" type="primary">grcA</name>
    <name type="ordered locus">SPC_2758</name>
</gene>
<sequence length="127" mass="14344">MITGIQITKAANDDLLNSFWLLDSEKGEARCIVAKSGFAEDEVVAVSKLGEIEYREIPMEVKPEVRVEGGQHLNVNVLRRETLEDAVKHPEKYPQLTIRVSGYAVRFNSLTPEQQRDVIARTFTESL</sequence>
<protein>
    <recommendedName>
        <fullName evidence="1">Autonomous glycyl radical cofactor</fullName>
    </recommendedName>
</protein>
<evidence type="ECO:0000255" key="1">
    <source>
        <dbReference type="HAMAP-Rule" id="MF_00806"/>
    </source>
</evidence>
<name>GRCA_SALPC</name>
<reference key="1">
    <citation type="journal article" date="2009" name="PLoS ONE">
        <title>Salmonella paratyphi C: genetic divergence from Salmonella choleraesuis and pathogenic convergence with Salmonella typhi.</title>
        <authorList>
            <person name="Liu W.-Q."/>
            <person name="Feng Y."/>
            <person name="Wang Y."/>
            <person name="Zou Q.-H."/>
            <person name="Chen F."/>
            <person name="Guo J.-T."/>
            <person name="Peng Y.-H."/>
            <person name="Jin Y."/>
            <person name="Li Y.-G."/>
            <person name="Hu S.-N."/>
            <person name="Johnston R.N."/>
            <person name="Liu G.-R."/>
            <person name="Liu S.-L."/>
        </authorList>
    </citation>
    <scope>NUCLEOTIDE SEQUENCE [LARGE SCALE GENOMIC DNA]</scope>
    <source>
        <strain>RKS4594</strain>
    </source>
</reference>
<dbReference type="EMBL" id="CP000857">
    <property type="protein sequence ID" value="ACN46858.1"/>
    <property type="molecule type" value="Genomic_DNA"/>
</dbReference>
<dbReference type="RefSeq" id="WP_000627811.1">
    <property type="nucleotide sequence ID" value="NC_012125.1"/>
</dbReference>
<dbReference type="SMR" id="C0PVZ1"/>
<dbReference type="GeneID" id="66757020"/>
<dbReference type="KEGG" id="sei:SPC_2758"/>
<dbReference type="HOGENOM" id="CLU_133780_0_0_6"/>
<dbReference type="Proteomes" id="UP000001599">
    <property type="component" value="Chromosome"/>
</dbReference>
<dbReference type="GO" id="GO:0005829">
    <property type="term" value="C:cytosol"/>
    <property type="evidence" value="ECO:0007669"/>
    <property type="project" value="TreeGrafter"/>
</dbReference>
<dbReference type="GO" id="GO:0008861">
    <property type="term" value="F:formate C-acetyltransferase activity"/>
    <property type="evidence" value="ECO:0007669"/>
    <property type="project" value="TreeGrafter"/>
</dbReference>
<dbReference type="FunFam" id="3.20.70.20:FF:000002">
    <property type="entry name" value="Autonomous glycyl radical cofactor"/>
    <property type="match status" value="1"/>
</dbReference>
<dbReference type="Gene3D" id="3.20.70.20">
    <property type="match status" value="1"/>
</dbReference>
<dbReference type="HAMAP" id="MF_00806">
    <property type="entry name" value="GrcA"/>
    <property type="match status" value="1"/>
</dbReference>
<dbReference type="InterPro" id="IPR050244">
    <property type="entry name" value="Auton_GlycylRad_Cofactor"/>
</dbReference>
<dbReference type="InterPro" id="IPR019777">
    <property type="entry name" value="Form_AcTrfase_GR_CS"/>
</dbReference>
<dbReference type="InterPro" id="IPR001150">
    <property type="entry name" value="Gly_radical"/>
</dbReference>
<dbReference type="InterPro" id="IPR011140">
    <property type="entry name" value="Glycyl_radical_cofactor_GrcA"/>
</dbReference>
<dbReference type="NCBIfam" id="TIGR04365">
    <property type="entry name" value="spare_glycyl"/>
    <property type="match status" value="1"/>
</dbReference>
<dbReference type="PANTHER" id="PTHR30191">
    <property type="entry name" value="FORMATE ACETYLTRANSFERASE"/>
    <property type="match status" value="1"/>
</dbReference>
<dbReference type="PANTHER" id="PTHR30191:SF0">
    <property type="entry name" value="FORMATE ACETYLTRANSFERASE 1"/>
    <property type="match status" value="1"/>
</dbReference>
<dbReference type="Pfam" id="PF01228">
    <property type="entry name" value="Gly_radical"/>
    <property type="match status" value="1"/>
</dbReference>
<dbReference type="PIRSF" id="PIRSF000378">
    <property type="entry name" value="Gly_radicl_yfiD"/>
    <property type="match status" value="1"/>
</dbReference>
<dbReference type="SUPFAM" id="SSF51998">
    <property type="entry name" value="PFL-like glycyl radical enzymes"/>
    <property type="match status" value="1"/>
</dbReference>
<dbReference type="PROSITE" id="PS00850">
    <property type="entry name" value="GLY_RADICAL_1"/>
    <property type="match status" value="1"/>
</dbReference>
<dbReference type="PROSITE" id="PS51149">
    <property type="entry name" value="GLY_RADICAL_2"/>
    <property type="match status" value="1"/>
</dbReference>